<gene>
    <name type="primary">tbx20</name>
</gene>
<proteinExistence type="evidence at transcript level"/>
<keyword id="KW-0217">Developmental protein</keyword>
<keyword id="KW-0238">DNA-binding</keyword>
<keyword id="KW-0539">Nucleus</keyword>
<keyword id="KW-1185">Reference proteome</keyword>
<keyword id="KW-0804">Transcription</keyword>
<keyword id="KW-0805">Transcription regulation</keyword>
<name>TBX20_DANRE</name>
<sequence length="446" mass="49303">MEYTSSPKPQLSSRANAFSIAALMSSGKTKDKESEENTIKPLEQFVEKSSCHPNLGDLPPLETHSDFSSGGGTGSGAPLCTEPLIPTTPGVPSEEMAKISCSLETKELWDKFHELGTEMIITKSGRRMFPTIRVSFSGVDPDAKYIVLMDIVPVDNKRYRYAYHRSSWLVAGKADPPLPARLYVHPDSPFTGEQLLKQMVSFEKVKLTNNELDQHGHIILNSMHKYQPRVHIIKKKDHTASLLNLKSEEFRTFVFTETVFTAVTAYQNQLITRLKIDSNPFAKGFRDSSRLTDIERESVESLIHKHSYARSPIRTYAGDEETLGEEGHSAHSRGSAFTASDNLSLSSWVTTTSGFSGFQHPQSLSAIGTSTASLASPLPHPIQGSLPPYSRLGMPLTPSALASSMQATGPTFPSFHMPRYHHYFQQGPYAAIQGLRHSSTVMTPFV</sequence>
<dbReference type="EMBL" id="AF239664">
    <property type="protein sequence ID" value="AAF42957.1"/>
    <property type="molecule type" value="mRNA"/>
</dbReference>
<dbReference type="EMBL" id="AF253325">
    <property type="protein sequence ID" value="AAF64322.1"/>
    <property type="molecule type" value="mRNA"/>
</dbReference>
<dbReference type="RefSeq" id="NP_571581.2">
    <property type="nucleotide sequence ID" value="NM_131506.2"/>
</dbReference>
<dbReference type="SMR" id="Q9I9K7"/>
<dbReference type="FunCoup" id="Q9I9K7">
    <property type="interactions" value="1094"/>
</dbReference>
<dbReference type="STRING" id="7955.ENSDARP00000026669"/>
<dbReference type="PaxDb" id="7955-ENSDARP00000089658"/>
<dbReference type="Ensembl" id="ENSDART00000017185">
    <property type="protein sequence ID" value="ENSDARP00000026669"/>
    <property type="gene ID" value="ENSDARG00000005150"/>
</dbReference>
<dbReference type="GeneID" id="57936"/>
<dbReference type="KEGG" id="dre:57936"/>
<dbReference type="AGR" id="ZFIN:ZDB-GENE-000427-7"/>
<dbReference type="CTD" id="57057"/>
<dbReference type="ZFIN" id="ZDB-GENE-000427-7">
    <property type="gene designation" value="tbx20"/>
</dbReference>
<dbReference type="eggNOG" id="KOG3586">
    <property type="taxonomic scope" value="Eukaryota"/>
</dbReference>
<dbReference type="HOGENOM" id="CLU_014430_7_1_1"/>
<dbReference type="InParanoid" id="Q9I9K7"/>
<dbReference type="OMA" id="EDGHTTH"/>
<dbReference type="OrthoDB" id="7442607at2759"/>
<dbReference type="PhylomeDB" id="Q9I9K7"/>
<dbReference type="PRO" id="PR:Q9I9K7"/>
<dbReference type="Proteomes" id="UP000000437">
    <property type="component" value="Chromosome 16"/>
</dbReference>
<dbReference type="Bgee" id="ENSDARG00000005150">
    <property type="expression patterns" value="Expressed in ganglionic layer of retina and 36 other cell types or tissues"/>
</dbReference>
<dbReference type="ExpressionAtlas" id="Q9I9K7">
    <property type="expression patterns" value="baseline"/>
</dbReference>
<dbReference type="GO" id="GO:0000785">
    <property type="term" value="C:chromatin"/>
    <property type="evidence" value="ECO:0000318"/>
    <property type="project" value="GO_Central"/>
</dbReference>
<dbReference type="GO" id="GO:0005634">
    <property type="term" value="C:nucleus"/>
    <property type="evidence" value="ECO:0000318"/>
    <property type="project" value="GO_Central"/>
</dbReference>
<dbReference type="GO" id="GO:0000981">
    <property type="term" value="F:DNA-binding transcription factor activity, RNA polymerase II-specific"/>
    <property type="evidence" value="ECO:0000318"/>
    <property type="project" value="GO_Central"/>
</dbReference>
<dbReference type="GO" id="GO:0000978">
    <property type="term" value="F:RNA polymerase II cis-regulatory region sequence-specific DNA binding"/>
    <property type="evidence" value="ECO:0000318"/>
    <property type="project" value="GO_Central"/>
</dbReference>
<dbReference type="GO" id="GO:0001525">
    <property type="term" value="P:angiogenesis"/>
    <property type="evidence" value="ECO:0000315"/>
    <property type="project" value="ZFIN"/>
</dbReference>
<dbReference type="GO" id="GO:0001568">
    <property type="term" value="P:blood vessel development"/>
    <property type="evidence" value="ECO:0000315"/>
    <property type="project" value="ZFIN"/>
</dbReference>
<dbReference type="GO" id="GO:0060038">
    <property type="term" value="P:cardiac muscle cell proliferation"/>
    <property type="evidence" value="ECO:0000315"/>
    <property type="project" value="ZFIN"/>
</dbReference>
<dbReference type="GO" id="GO:0001708">
    <property type="term" value="P:cell fate specification"/>
    <property type="evidence" value="ECO:0000318"/>
    <property type="project" value="GO_Central"/>
</dbReference>
<dbReference type="GO" id="GO:0035844">
    <property type="term" value="P:cloaca development"/>
    <property type="evidence" value="ECO:0000315"/>
    <property type="project" value="ZFIN"/>
</dbReference>
<dbReference type="GO" id="GO:0035050">
    <property type="term" value="P:embryonic heart tube development"/>
    <property type="evidence" value="ECO:0000315"/>
    <property type="project" value="ZFIN"/>
</dbReference>
<dbReference type="GO" id="GO:0035162">
    <property type="term" value="P:embryonic hemopoiesis"/>
    <property type="evidence" value="ECO:0000315"/>
    <property type="project" value="ZFIN"/>
</dbReference>
<dbReference type="GO" id="GO:0007507">
    <property type="term" value="P:heart development"/>
    <property type="evidence" value="ECO:0000315"/>
    <property type="project" value="ZFIN"/>
</dbReference>
<dbReference type="GO" id="GO:0001947">
    <property type="term" value="P:heart looping"/>
    <property type="evidence" value="ECO:0000315"/>
    <property type="project" value="ZFIN"/>
</dbReference>
<dbReference type="GO" id="GO:0003313">
    <property type="term" value="P:heart rudiment development"/>
    <property type="evidence" value="ECO:0000315"/>
    <property type="project" value="ZFIN"/>
</dbReference>
<dbReference type="GO" id="GO:0045892">
    <property type="term" value="P:negative regulation of DNA-templated transcription"/>
    <property type="evidence" value="ECO:0000315"/>
    <property type="project" value="ZFIN"/>
</dbReference>
<dbReference type="GO" id="GO:0045893">
    <property type="term" value="P:positive regulation of DNA-templated transcription"/>
    <property type="evidence" value="ECO:0007669"/>
    <property type="project" value="InterPro"/>
</dbReference>
<dbReference type="GO" id="GO:0060043">
    <property type="term" value="P:regulation of cardiac muscle cell proliferation"/>
    <property type="evidence" value="ECO:0000315"/>
    <property type="project" value="ZFIN"/>
</dbReference>
<dbReference type="GO" id="GO:0006357">
    <property type="term" value="P:regulation of transcription by RNA polymerase II"/>
    <property type="evidence" value="ECO:0000318"/>
    <property type="project" value="GO_Central"/>
</dbReference>
<dbReference type="GO" id="GO:0001570">
    <property type="term" value="P:vasculogenesis"/>
    <property type="evidence" value="ECO:0000315"/>
    <property type="project" value="ZFIN"/>
</dbReference>
<dbReference type="CDD" id="cd20193">
    <property type="entry name" value="T-box_TBX20-like"/>
    <property type="match status" value="1"/>
</dbReference>
<dbReference type="FunFam" id="2.60.40.820:FF:000008">
    <property type="entry name" value="T-box transcription factor TBX20"/>
    <property type="match status" value="1"/>
</dbReference>
<dbReference type="Gene3D" id="2.60.40.820">
    <property type="entry name" value="Transcription factor, T-box"/>
    <property type="match status" value="1"/>
</dbReference>
<dbReference type="InterPro" id="IPR008967">
    <property type="entry name" value="p53-like_TF_DNA-bd_sf"/>
</dbReference>
<dbReference type="InterPro" id="IPR046360">
    <property type="entry name" value="T-box_DNA-bd"/>
</dbReference>
<dbReference type="InterPro" id="IPR036960">
    <property type="entry name" value="T-box_sf"/>
</dbReference>
<dbReference type="InterPro" id="IPR001699">
    <property type="entry name" value="TF_T-box"/>
</dbReference>
<dbReference type="InterPro" id="IPR018186">
    <property type="entry name" value="TF_T-box_CS"/>
</dbReference>
<dbReference type="PANTHER" id="PTHR11267">
    <property type="entry name" value="T-BOX PROTEIN-RELATED"/>
    <property type="match status" value="1"/>
</dbReference>
<dbReference type="PANTHER" id="PTHR11267:SF190">
    <property type="entry name" value="T-BOX TRANSCRIPTION FACTOR TBX20"/>
    <property type="match status" value="1"/>
</dbReference>
<dbReference type="Pfam" id="PF00907">
    <property type="entry name" value="T-box"/>
    <property type="match status" value="1"/>
</dbReference>
<dbReference type="PRINTS" id="PR00937">
    <property type="entry name" value="TBOX"/>
</dbReference>
<dbReference type="SMART" id="SM00425">
    <property type="entry name" value="TBOX"/>
    <property type="match status" value="1"/>
</dbReference>
<dbReference type="SUPFAM" id="SSF49417">
    <property type="entry name" value="p53-like transcription factors"/>
    <property type="match status" value="1"/>
</dbReference>
<dbReference type="PROSITE" id="PS01283">
    <property type="entry name" value="TBOX_1"/>
    <property type="match status" value="1"/>
</dbReference>
<dbReference type="PROSITE" id="PS01264">
    <property type="entry name" value="TBOX_2"/>
    <property type="match status" value="1"/>
</dbReference>
<dbReference type="PROSITE" id="PS50252">
    <property type="entry name" value="TBOX_3"/>
    <property type="match status" value="1"/>
</dbReference>
<feature type="chain" id="PRO_0000262693" description="T-box transcription factor TBX20">
    <location>
        <begin position="1"/>
        <end position="446"/>
    </location>
</feature>
<feature type="DNA-binding region" description="T-box" evidence="1">
    <location>
        <begin position="108"/>
        <end position="287"/>
    </location>
</feature>
<feature type="region of interest" description="Disordered" evidence="2">
    <location>
        <begin position="50"/>
        <end position="80"/>
    </location>
</feature>
<feature type="sequence conflict" description="In Ref. 2; AAF64322." evidence="5" ref="2">
    <original>M</original>
    <variation>K</variation>
    <location>
        <position position="96"/>
    </location>
</feature>
<feature type="sequence conflict" description="In Ref. 2; AAF64322." evidence="5" ref="2">
    <original>L</original>
    <variation>P</variation>
    <location>
        <position position="148"/>
    </location>
</feature>
<feature type="sequence conflict" description="In Ref. 2; AAF64322." evidence="5" ref="2">
    <original>L</original>
    <variation>S</variation>
    <location>
        <position position="196"/>
    </location>
</feature>
<feature type="sequence conflict" description="In Ref. 2; AAF64322." evidence="5" ref="2">
    <original>AV</original>
    <variation>CR</variation>
    <location>
        <begin position="262"/>
        <end position="263"/>
    </location>
</feature>
<feature type="sequence conflict" description="In Ref. 2; AAF64322." evidence="5" ref="2">
    <original>G</original>
    <variation>D</variation>
    <location>
        <position position="368"/>
    </location>
</feature>
<evidence type="ECO:0000255" key="1">
    <source>
        <dbReference type="PROSITE-ProRule" id="PRU00201"/>
    </source>
</evidence>
<evidence type="ECO:0000256" key="2">
    <source>
        <dbReference type="SAM" id="MobiDB-lite"/>
    </source>
</evidence>
<evidence type="ECO:0000269" key="3">
    <source>
    </source>
</evidence>
<evidence type="ECO:0000269" key="4">
    <source>
    </source>
</evidence>
<evidence type="ECO:0000305" key="5"/>
<comment type="function">
    <text evidence="3">Transcriptional regulator that may play a very early role in the differentiation of the cardiac precursors.</text>
</comment>
<comment type="subcellular location">
    <subcellularLocation>
        <location evidence="1">Nucleus</location>
    </subcellularLocation>
</comment>
<comment type="developmental stage">
    <text evidence="3 4">During development, expressed in embryonic structures of both mesodermal and ectodermal origins, including the heart, cranial motor neurons and the roof of the dorsal aorta. Prominently associated with heart formation and continuously expressed in the myocardial lineage from the initiation of myocardial differentiation through to formation of the differentiated, two chambered heart. First detected in anterior lateral plate mesoderm (ALPM) and by the 5- to 10-somite stages, strongly expressed in ALPM and in two bilateral groups of mesenchymal cells close to the anterior notochord and in a crescent of lateral plate adjacent to the tail. At the 6- to 8- and 12- to 14-somite stages, expressed throughout the ALPM. Between the 10 and 15-somite stages, expressed throughout the myocardium. At the 18-somite stage, expressed in the loosely packed mesenchymal cells in the midline immediately anterior to the heart fields. Later expression seen in the cardiac cone, cardiac tube and ventricle.</text>
</comment>
<reference key="1">
    <citation type="journal article" date="2000" name="Dev. Biol.">
        <title>A conserved role for H15-related T-box transcription factors in zebrafish and Drosophila heart formation.</title>
        <authorList>
            <person name="Griffin K.J.P."/>
            <person name="Stoller J."/>
            <person name="Gibson M."/>
            <person name="Chen S."/>
            <person name="Yelon D."/>
            <person name="Stainier D.Y."/>
            <person name="Kimelman D."/>
        </authorList>
    </citation>
    <scope>NUCLEOTIDE SEQUENCE [MRNA]</scope>
    <scope>FUNCTION</scope>
    <scope>DEVELOPMENTAL STAGE</scope>
</reference>
<reference key="2">
    <citation type="journal article" date="2000" name="Mech. Dev.">
        <title>tbx20, a new vertebrate T-box gene expressed in the cranial motor neurons and developing cardiovascular structures in zebrafish.</title>
        <authorList>
            <person name="Ahn D.-G."/>
            <person name="Ruvinsky I."/>
            <person name="Oates A.C."/>
            <person name="Silver L.M."/>
            <person name="Ho R.K."/>
        </authorList>
    </citation>
    <scope>NUCLEOTIDE SEQUENCE [MRNA]</scope>
    <scope>DEVELOPMENTAL STAGE</scope>
</reference>
<accession>Q9I9K7</accession>
<accession>Q9I8L6</accession>
<protein>
    <recommendedName>
        <fullName>T-box transcription factor TBX20</fullName>
        <shortName>T-box protein 20</shortName>
    </recommendedName>
    <alternativeName>
        <fullName>H15-related T-box transcription factor hrT</fullName>
    </alternativeName>
</protein>
<organism>
    <name type="scientific">Danio rerio</name>
    <name type="common">Zebrafish</name>
    <name type="synonym">Brachydanio rerio</name>
    <dbReference type="NCBI Taxonomy" id="7955"/>
    <lineage>
        <taxon>Eukaryota</taxon>
        <taxon>Metazoa</taxon>
        <taxon>Chordata</taxon>
        <taxon>Craniata</taxon>
        <taxon>Vertebrata</taxon>
        <taxon>Euteleostomi</taxon>
        <taxon>Actinopterygii</taxon>
        <taxon>Neopterygii</taxon>
        <taxon>Teleostei</taxon>
        <taxon>Ostariophysi</taxon>
        <taxon>Cypriniformes</taxon>
        <taxon>Danionidae</taxon>
        <taxon>Danioninae</taxon>
        <taxon>Danio</taxon>
    </lineage>
</organism>